<comment type="catalytic activity">
    <reaction>
        <text>L-seryl-[protein] + ATP = O-phospho-L-seryl-[protein] + ADP + H(+)</text>
        <dbReference type="Rhea" id="RHEA:17989"/>
        <dbReference type="Rhea" id="RHEA-COMP:9863"/>
        <dbReference type="Rhea" id="RHEA-COMP:11604"/>
        <dbReference type="ChEBI" id="CHEBI:15378"/>
        <dbReference type="ChEBI" id="CHEBI:29999"/>
        <dbReference type="ChEBI" id="CHEBI:30616"/>
        <dbReference type="ChEBI" id="CHEBI:83421"/>
        <dbReference type="ChEBI" id="CHEBI:456216"/>
        <dbReference type="EC" id="2.7.11.1"/>
    </reaction>
</comment>
<comment type="catalytic activity">
    <reaction>
        <text>L-threonyl-[protein] + ATP = O-phospho-L-threonyl-[protein] + ADP + H(+)</text>
        <dbReference type="Rhea" id="RHEA:46608"/>
        <dbReference type="Rhea" id="RHEA-COMP:11060"/>
        <dbReference type="Rhea" id="RHEA-COMP:11605"/>
        <dbReference type="ChEBI" id="CHEBI:15378"/>
        <dbReference type="ChEBI" id="CHEBI:30013"/>
        <dbReference type="ChEBI" id="CHEBI:30616"/>
        <dbReference type="ChEBI" id="CHEBI:61977"/>
        <dbReference type="ChEBI" id="CHEBI:456216"/>
        <dbReference type="EC" id="2.7.11.1"/>
    </reaction>
</comment>
<comment type="subcellular location">
    <subcellularLocation>
        <location evidence="1">Membrane</location>
        <topology evidence="1">Single-pass type I membrane protein</topology>
    </subcellularLocation>
</comment>
<comment type="similarity">
    <text evidence="4">In the C-terminal section; belongs to the protein kinase superfamily. Ser/Thr protein kinase family.</text>
</comment>
<comment type="similarity">
    <text evidence="4">In the N-terminal section; belongs to the leguminous lectin family.</text>
</comment>
<comment type="sequence caution" evidence="4">
    <conflict type="frameshift">
        <sequence resource="EMBL-CDS" id="CAA65153"/>
    </conflict>
</comment>
<accession>O80939</accession>
<accession>Q39139</accession>
<dbReference type="EC" id="2.7.11.1"/>
<dbReference type="EMBL" id="X95909">
    <property type="protein sequence ID" value="CAA65153.1"/>
    <property type="status" value="ALT_FRAME"/>
    <property type="molecule type" value="mRNA"/>
</dbReference>
<dbReference type="EMBL" id="AC004684">
    <property type="protein sequence ID" value="AAC23641.1"/>
    <property type="molecule type" value="Genomic_DNA"/>
</dbReference>
<dbReference type="EMBL" id="CP002685">
    <property type="protein sequence ID" value="AEC09438.1"/>
    <property type="molecule type" value="Genomic_DNA"/>
</dbReference>
<dbReference type="EMBL" id="AY091070">
    <property type="protein sequence ID" value="AAM13890.1"/>
    <property type="molecule type" value="mRNA"/>
</dbReference>
<dbReference type="PIR" id="T02537">
    <property type="entry name" value="T02537"/>
</dbReference>
<dbReference type="PIR" id="T50661">
    <property type="entry name" value="T50661"/>
</dbReference>
<dbReference type="RefSeq" id="NP_181307.1">
    <property type="nucleotide sequence ID" value="NM_129327.4"/>
</dbReference>
<dbReference type="SMR" id="O80939"/>
<dbReference type="BioGRID" id="3692">
    <property type="interactions" value="5"/>
</dbReference>
<dbReference type="FunCoup" id="O80939">
    <property type="interactions" value="104"/>
</dbReference>
<dbReference type="STRING" id="3702.O80939"/>
<dbReference type="GlyCosmos" id="O80939">
    <property type="glycosylation" value="6 sites, No reported glycans"/>
</dbReference>
<dbReference type="GlyGen" id="O80939">
    <property type="glycosylation" value="6 sites"/>
</dbReference>
<dbReference type="iPTMnet" id="O80939"/>
<dbReference type="PaxDb" id="3702-AT2G37710.1"/>
<dbReference type="ProteomicsDB" id="238499"/>
<dbReference type="EnsemblPlants" id="AT2G37710.1">
    <property type="protein sequence ID" value="AT2G37710.1"/>
    <property type="gene ID" value="AT2G37710"/>
</dbReference>
<dbReference type="GeneID" id="818348"/>
<dbReference type="Gramene" id="AT2G37710.1">
    <property type="protein sequence ID" value="AT2G37710.1"/>
    <property type="gene ID" value="AT2G37710"/>
</dbReference>
<dbReference type="KEGG" id="ath:AT2G37710"/>
<dbReference type="Araport" id="AT2G37710"/>
<dbReference type="TAIR" id="AT2G37710">
    <property type="gene designation" value="LECRK-IV.1"/>
</dbReference>
<dbReference type="eggNOG" id="ENOG502QSJ4">
    <property type="taxonomic scope" value="Eukaryota"/>
</dbReference>
<dbReference type="HOGENOM" id="CLU_000288_62_3_1"/>
<dbReference type="InParanoid" id="O80939"/>
<dbReference type="OMA" id="TILPWAR"/>
<dbReference type="OrthoDB" id="543442at2759"/>
<dbReference type="PhylomeDB" id="O80939"/>
<dbReference type="PRO" id="PR:O80939"/>
<dbReference type="Proteomes" id="UP000006548">
    <property type="component" value="Chromosome 2"/>
</dbReference>
<dbReference type="ExpressionAtlas" id="O80939">
    <property type="expression patterns" value="baseline and differential"/>
</dbReference>
<dbReference type="GO" id="GO:0005783">
    <property type="term" value="C:endoplasmic reticulum"/>
    <property type="evidence" value="ECO:0007005"/>
    <property type="project" value="TAIR"/>
</dbReference>
<dbReference type="GO" id="GO:0016020">
    <property type="term" value="C:membrane"/>
    <property type="evidence" value="ECO:0007669"/>
    <property type="project" value="UniProtKB-SubCell"/>
</dbReference>
<dbReference type="GO" id="GO:0005524">
    <property type="term" value="F:ATP binding"/>
    <property type="evidence" value="ECO:0007669"/>
    <property type="project" value="UniProtKB-KW"/>
</dbReference>
<dbReference type="GO" id="GO:0030246">
    <property type="term" value="F:carbohydrate binding"/>
    <property type="evidence" value="ECO:0007669"/>
    <property type="project" value="UniProtKB-KW"/>
</dbReference>
<dbReference type="GO" id="GO:0106310">
    <property type="term" value="F:protein serine kinase activity"/>
    <property type="evidence" value="ECO:0007669"/>
    <property type="project" value="RHEA"/>
</dbReference>
<dbReference type="GO" id="GO:0004674">
    <property type="term" value="F:protein serine/threonine kinase activity"/>
    <property type="evidence" value="ECO:0007669"/>
    <property type="project" value="UniProtKB-KW"/>
</dbReference>
<dbReference type="GO" id="GO:0009751">
    <property type="term" value="P:response to salicylic acid"/>
    <property type="evidence" value="ECO:0000270"/>
    <property type="project" value="TAIR"/>
</dbReference>
<dbReference type="CDD" id="cd06899">
    <property type="entry name" value="lectin_legume_LecRK_Arcelin_ConA"/>
    <property type="match status" value="1"/>
</dbReference>
<dbReference type="CDD" id="cd14066">
    <property type="entry name" value="STKc_IRAK"/>
    <property type="match status" value="1"/>
</dbReference>
<dbReference type="FunFam" id="1.10.510.10:FF:000108">
    <property type="entry name" value="L-type lectin-domain containing receptor kinase S.4"/>
    <property type="match status" value="1"/>
</dbReference>
<dbReference type="FunFam" id="2.60.120.200:FF:000051">
    <property type="entry name" value="L-type lectin-domain containing receptor kinase V.9"/>
    <property type="match status" value="1"/>
</dbReference>
<dbReference type="FunFam" id="3.30.200.20:FF:000112">
    <property type="entry name" value="Lectin-domain containing receptor kinase A4.3"/>
    <property type="match status" value="1"/>
</dbReference>
<dbReference type="Gene3D" id="2.60.120.200">
    <property type="match status" value="1"/>
</dbReference>
<dbReference type="Gene3D" id="3.30.200.20">
    <property type="entry name" value="Phosphorylase Kinase, domain 1"/>
    <property type="match status" value="1"/>
</dbReference>
<dbReference type="Gene3D" id="1.10.510.10">
    <property type="entry name" value="Transferase(Phosphotransferase) domain 1"/>
    <property type="match status" value="1"/>
</dbReference>
<dbReference type="InterPro" id="IPR013320">
    <property type="entry name" value="ConA-like_dom_sf"/>
</dbReference>
<dbReference type="InterPro" id="IPR011009">
    <property type="entry name" value="Kinase-like_dom_sf"/>
</dbReference>
<dbReference type="InterPro" id="IPR050528">
    <property type="entry name" value="L-type_Lectin-RKs"/>
</dbReference>
<dbReference type="InterPro" id="IPR001220">
    <property type="entry name" value="Legume_lectin_dom"/>
</dbReference>
<dbReference type="InterPro" id="IPR000719">
    <property type="entry name" value="Prot_kinase_dom"/>
</dbReference>
<dbReference type="InterPro" id="IPR017441">
    <property type="entry name" value="Protein_kinase_ATP_BS"/>
</dbReference>
<dbReference type="InterPro" id="IPR008271">
    <property type="entry name" value="Ser/Thr_kinase_AS"/>
</dbReference>
<dbReference type="PANTHER" id="PTHR27007">
    <property type="match status" value="1"/>
</dbReference>
<dbReference type="Pfam" id="PF00139">
    <property type="entry name" value="Lectin_legB"/>
    <property type="match status" value="1"/>
</dbReference>
<dbReference type="Pfam" id="PF00069">
    <property type="entry name" value="Pkinase"/>
    <property type="match status" value="1"/>
</dbReference>
<dbReference type="SMART" id="SM00220">
    <property type="entry name" value="S_TKc"/>
    <property type="match status" value="1"/>
</dbReference>
<dbReference type="SUPFAM" id="SSF49899">
    <property type="entry name" value="Concanavalin A-like lectins/glucanases"/>
    <property type="match status" value="1"/>
</dbReference>
<dbReference type="SUPFAM" id="SSF56112">
    <property type="entry name" value="Protein kinase-like (PK-like)"/>
    <property type="match status" value="1"/>
</dbReference>
<dbReference type="PROSITE" id="PS00107">
    <property type="entry name" value="PROTEIN_KINASE_ATP"/>
    <property type="match status" value="1"/>
</dbReference>
<dbReference type="PROSITE" id="PS50011">
    <property type="entry name" value="PROTEIN_KINASE_DOM"/>
    <property type="match status" value="1"/>
</dbReference>
<dbReference type="PROSITE" id="PS00108">
    <property type="entry name" value="PROTEIN_KINASE_ST"/>
    <property type="match status" value="1"/>
</dbReference>
<organism>
    <name type="scientific">Arabidopsis thaliana</name>
    <name type="common">Mouse-ear cress</name>
    <dbReference type="NCBI Taxonomy" id="3702"/>
    <lineage>
        <taxon>Eukaryota</taxon>
        <taxon>Viridiplantae</taxon>
        <taxon>Streptophyta</taxon>
        <taxon>Embryophyta</taxon>
        <taxon>Tracheophyta</taxon>
        <taxon>Spermatophyta</taxon>
        <taxon>Magnoliopsida</taxon>
        <taxon>eudicotyledons</taxon>
        <taxon>Gunneridae</taxon>
        <taxon>Pentapetalae</taxon>
        <taxon>rosids</taxon>
        <taxon>malvids</taxon>
        <taxon>Brassicales</taxon>
        <taxon>Brassicaceae</taxon>
        <taxon>Camelineae</taxon>
        <taxon>Arabidopsis</taxon>
    </lineage>
</organism>
<reference key="1">
    <citation type="online journal article" date="1996" name="Plant Gene Register">
        <title>A new class of receptor-like protein kinase gene from Arabidopsis thaliana possessing a domain with similarity to plant lectin genes.</title>
        <authorList>
            <person name="Swarup R."/>
            <person name="Dumas C."/>
            <person name="Cock J.M."/>
        </authorList>
        <locator>PGR96-022</locator>
    </citation>
    <scope>NUCLEOTIDE SEQUENCE [MRNA]</scope>
    <source>
        <strain>cv. Landsberg erecta</strain>
        <tissue>Flower</tissue>
    </source>
</reference>
<reference key="2">
    <citation type="journal article" date="1999" name="Nature">
        <title>Sequence and analysis of chromosome 2 of the plant Arabidopsis thaliana.</title>
        <authorList>
            <person name="Lin X."/>
            <person name="Kaul S."/>
            <person name="Rounsley S.D."/>
            <person name="Shea T.P."/>
            <person name="Benito M.-I."/>
            <person name="Town C.D."/>
            <person name="Fujii C.Y."/>
            <person name="Mason T.M."/>
            <person name="Bowman C.L."/>
            <person name="Barnstead M.E."/>
            <person name="Feldblyum T.V."/>
            <person name="Buell C.R."/>
            <person name="Ketchum K.A."/>
            <person name="Lee J.J."/>
            <person name="Ronning C.M."/>
            <person name="Koo H.L."/>
            <person name="Moffat K.S."/>
            <person name="Cronin L.A."/>
            <person name="Shen M."/>
            <person name="Pai G."/>
            <person name="Van Aken S."/>
            <person name="Umayam L."/>
            <person name="Tallon L.J."/>
            <person name="Gill J.E."/>
            <person name="Adams M.D."/>
            <person name="Carrera A.J."/>
            <person name="Creasy T.H."/>
            <person name="Goodman H.M."/>
            <person name="Somerville C.R."/>
            <person name="Copenhaver G.P."/>
            <person name="Preuss D."/>
            <person name="Nierman W.C."/>
            <person name="White O."/>
            <person name="Eisen J.A."/>
            <person name="Salzberg S.L."/>
            <person name="Fraser C.M."/>
            <person name="Venter J.C."/>
        </authorList>
    </citation>
    <scope>NUCLEOTIDE SEQUENCE [LARGE SCALE GENOMIC DNA]</scope>
    <source>
        <strain>cv. Columbia</strain>
    </source>
</reference>
<reference key="3">
    <citation type="journal article" date="2017" name="Plant J.">
        <title>Araport11: a complete reannotation of the Arabidopsis thaliana reference genome.</title>
        <authorList>
            <person name="Cheng C.Y."/>
            <person name="Krishnakumar V."/>
            <person name="Chan A.P."/>
            <person name="Thibaud-Nissen F."/>
            <person name="Schobel S."/>
            <person name="Town C.D."/>
        </authorList>
    </citation>
    <scope>GENOME REANNOTATION</scope>
    <source>
        <strain>cv. Columbia</strain>
    </source>
</reference>
<reference key="4">
    <citation type="journal article" date="2003" name="Science">
        <title>Empirical analysis of transcriptional activity in the Arabidopsis genome.</title>
        <authorList>
            <person name="Yamada K."/>
            <person name="Lim J."/>
            <person name="Dale J.M."/>
            <person name="Chen H."/>
            <person name="Shinn P."/>
            <person name="Palm C.J."/>
            <person name="Southwick A.M."/>
            <person name="Wu H.C."/>
            <person name="Kim C.J."/>
            <person name="Nguyen M."/>
            <person name="Pham P.K."/>
            <person name="Cheuk R.F."/>
            <person name="Karlin-Newmann G."/>
            <person name="Liu S.X."/>
            <person name="Lam B."/>
            <person name="Sakano H."/>
            <person name="Wu T."/>
            <person name="Yu G."/>
            <person name="Miranda M."/>
            <person name="Quach H.L."/>
            <person name="Tripp M."/>
            <person name="Chang C.H."/>
            <person name="Lee J.M."/>
            <person name="Toriumi M.J."/>
            <person name="Chan M.M."/>
            <person name="Tang C.C."/>
            <person name="Onodera C.S."/>
            <person name="Deng J.M."/>
            <person name="Akiyama K."/>
            <person name="Ansari Y."/>
            <person name="Arakawa T."/>
            <person name="Banh J."/>
            <person name="Banno F."/>
            <person name="Bowser L."/>
            <person name="Brooks S.Y."/>
            <person name="Carninci P."/>
            <person name="Chao Q."/>
            <person name="Choy N."/>
            <person name="Enju A."/>
            <person name="Goldsmith A.D."/>
            <person name="Gurjal M."/>
            <person name="Hansen N.F."/>
            <person name="Hayashizaki Y."/>
            <person name="Johnson-Hopson C."/>
            <person name="Hsuan V.W."/>
            <person name="Iida K."/>
            <person name="Karnes M."/>
            <person name="Khan S."/>
            <person name="Koesema E."/>
            <person name="Ishida J."/>
            <person name="Jiang P.X."/>
            <person name="Jones T."/>
            <person name="Kawai J."/>
            <person name="Kamiya A."/>
            <person name="Meyers C."/>
            <person name="Nakajima M."/>
            <person name="Narusaka M."/>
            <person name="Seki M."/>
            <person name="Sakurai T."/>
            <person name="Satou M."/>
            <person name="Tamse R."/>
            <person name="Vaysberg M."/>
            <person name="Wallender E.K."/>
            <person name="Wong C."/>
            <person name="Yamamura Y."/>
            <person name="Yuan S."/>
            <person name="Shinozaki K."/>
            <person name="Davis R.W."/>
            <person name="Theologis A."/>
            <person name="Ecker J.R."/>
        </authorList>
    </citation>
    <scope>NUCLEOTIDE SEQUENCE [LARGE SCALE MRNA]</scope>
    <source>
        <strain>cv. Columbia</strain>
    </source>
</reference>
<reference key="5">
    <citation type="journal article" date="1999" name="Plant Mol. Biol.">
        <title>Characterization of the Arabidopsis lecRK-a genes: members of a superfamily encoding putative receptors with an extracellular domain homologous to legume lectins.</title>
        <authorList>
            <person name="Herve C."/>
            <person name="Serres J."/>
            <person name="Dabos P."/>
            <person name="Canut H."/>
            <person name="Barre A."/>
            <person name="Rouge P."/>
            <person name="Lescure B."/>
        </authorList>
    </citation>
    <scope>GENE FAMILY</scope>
</reference>
<reference key="6">
    <citation type="journal article" date="2002" name="Crit. Rev. Plant Sci.">
        <title>Lectin receptor kinases in plants.</title>
        <authorList>
            <person name="Barre A."/>
            <person name="Herve C."/>
            <person name="Lescure B."/>
            <person name="Rouge P."/>
        </authorList>
    </citation>
    <scope>GENE FAMILY</scope>
</reference>
<reference key="7">
    <citation type="journal article" date="2009" name="J. Exp. Bot.">
        <title>Arabidopsis L-type lectin receptor kinases: phylogeny, classification, and expression profiles.</title>
        <authorList>
            <person name="Bouwmeester K."/>
            <person name="Govers F."/>
        </authorList>
    </citation>
    <scope>GENE FAMILY</scope>
    <scope>NOMENCLATURE</scope>
</reference>
<evidence type="ECO:0000255" key="1"/>
<evidence type="ECO:0000255" key="2">
    <source>
        <dbReference type="PROSITE-ProRule" id="PRU00159"/>
    </source>
</evidence>
<evidence type="ECO:0000255" key="3">
    <source>
        <dbReference type="PROSITE-ProRule" id="PRU10027"/>
    </source>
</evidence>
<evidence type="ECO:0000305" key="4"/>
<sequence length="675" mass="75541">MFLKLLTIFFFFFFNLIFQSSSQSLNFAYNNGFNPPTDLSIQGITTVTPNGLLKLTNTTVQKTGHAFYTKPIRFKDSPNGTVSSFSTSFVFAIHSQIAILSGHGIAFVVAPNASLPYGNPSQYIGLFNLANNGNETNHVFAVELDTILSTEFNDTNDNHVGIDINSLKSVQSSPAGYWDEKGQFKNLTLISRKPMQVWVDYDGRTNKIDVTMAPFNEDKPTRPLVTAVRDLSSVLLQDMYVGFSSATGSVLSEHYILGWSFGLNEKAPPLALSRLPKLPRFEPKRISEFYKIGMPLISLFLIFSFIFLVCYIVRRRRKFAEELEEWEKEFGKNRFRFKDLYYATKGFKEKGLLGTGGFGSVYKGVMPGTKLEIAVKRVSHESRQGMKEFVAEIVSIGRMSHRNLVPLLGYCRRRGELLLVYDYMPNGSLDKYLYNTPEVTLNWKQRIKVILGVASGLFYLHEEWEQVVIHRDVKASNVLLDGELNGRLGDFGLARLYDHGSDPQTTHVVGTLGYLAPEHTRTGRATMATDVFAFGAFLLEVACGRRPIEFQQETDETFLLVDWVFGLWNKGDILAAKDPNMGSECDEKEVEMVLKLGLLCSHSDPRARPSMRQVLHYLRGDAKLPELSPLDLSGSGMMFGVHDGFSELGMSYSSSVFKGFTGGSSIADSQLSGGR</sequence>
<feature type="signal peptide" evidence="1">
    <location>
        <begin position="1"/>
        <end position="22"/>
    </location>
</feature>
<feature type="chain" id="PRO_0000403085" description="L-type lectin-domain containing receptor kinase IV.1">
    <location>
        <begin position="23"/>
        <end position="675"/>
    </location>
</feature>
<feature type="topological domain" description="Extracellular" evidence="1">
    <location>
        <begin position="23"/>
        <end position="291"/>
    </location>
</feature>
<feature type="transmembrane region" description="Helical" evidence="1">
    <location>
        <begin position="292"/>
        <end position="312"/>
    </location>
</feature>
<feature type="topological domain" description="Cytoplasmic" evidence="1">
    <location>
        <begin position="313"/>
        <end position="675"/>
    </location>
</feature>
<feature type="domain" description="Protein kinase" evidence="2">
    <location>
        <begin position="347"/>
        <end position="624"/>
    </location>
</feature>
<feature type="region of interest" description="Legume-lectin like">
    <location>
        <begin position="25"/>
        <end position="261"/>
    </location>
</feature>
<feature type="active site" description="Proton acceptor" evidence="2 3">
    <location>
        <position position="472"/>
    </location>
</feature>
<feature type="binding site" evidence="2">
    <location>
        <begin position="353"/>
        <end position="361"/>
    </location>
    <ligand>
        <name>ATP</name>
        <dbReference type="ChEBI" id="CHEBI:30616"/>
    </ligand>
</feature>
<feature type="binding site" evidence="2">
    <location>
        <position position="376"/>
    </location>
    <ligand>
        <name>ATP</name>
        <dbReference type="ChEBI" id="CHEBI:30616"/>
    </ligand>
</feature>
<feature type="glycosylation site" description="N-linked (GlcNAc...) asparagine" evidence="1">
    <location>
        <position position="57"/>
    </location>
</feature>
<feature type="glycosylation site" description="N-linked (GlcNAc...) asparagine" evidence="1">
    <location>
        <position position="79"/>
    </location>
</feature>
<feature type="glycosylation site" description="N-linked (GlcNAc...) asparagine" evidence="1">
    <location>
        <position position="112"/>
    </location>
</feature>
<feature type="glycosylation site" description="N-linked (GlcNAc...) asparagine" evidence="1">
    <location>
        <position position="134"/>
    </location>
</feature>
<feature type="glycosylation site" description="N-linked (GlcNAc...) asparagine" evidence="1">
    <location>
        <position position="153"/>
    </location>
</feature>
<feature type="glycosylation site" description="N-linked (GlcNAc...) asparagine" evidence="1">
    <location>
        <position position="186"/>
    </location>
</feature>
<feature type="sequence conflict" description="In Ref. 1; CAA65153." evidence="4" ref="1">
    <location>
        <position position="12"/>
    </location>
</feature>
<feature type="sequence conflict" description="In Ref. 1; CAA65153." evidence="4" ref="1">
    <original>I</original>
    <variation>S</variation>
    <location>
        <position position="99"/>
    </location>
</feature>
<feature type="sequence conflict" description="In Ref. 1; CAA65153." evidence="4" ref="1">
    <original>LA</original>
    <variation>IT</variation>
    <location>
        <begin position="129"/>
        <end position="130"/>
    </location>
</feature>
<feature type="sequence conflict" description="In Ref. 1; CAA65153." evidence="4" ref="1">
    <original>LFLI</original>
    <variation>QFFF</variation>
    <location>
        <begin position="299"/>
        <end position="302"/>
    </location>
</feature>
<feature type="sequence conflict" description="In Ref. 1; CAA65153." evidence="4" ref="1">
    <original>G</original>
    <variation>R</variation>
    <location>
        <position position="482"/>
    </location>
</feature>
<protein>
    <recommendedName>
        <fullName>L-type lectin-domain containing receptor kinase IV.1</fullName>
        <shortName>Arabidopsis thaliana lectin-receptor kinase e</shortName>
        <shortName>AthlecRK-e</shortName>
        <shortName>LecRK-IV.1</shortName>
        <ecNumber>2.7.11.1</ecNumber>
    </recommendedName>
    <alternativeName>
        <fullName>Lectin Receptor Kinase 1</fullName>
    </alternativeName>
</protein>
<name>LRK41_ARATH</name>
<proteinExistence type="evidence at transcript level"/>
<keyword id="KW-0067">ATP-binding</keyword>
<keyword id="KW-0325">Glycoprotein</keyword>
<keyword id="KW-0418">Kinase</keyword>
<keyword id="KW-0430">Lectin</keyword>
<keyword id="KW-0472">Membrane</keyword>
<keyword id="KW-0547">Nucleotide-binding</keyword>
<keyword id="KW-0675">Receptor</keyword>
<keyword id="KW-1185">Reference proteome</keyword>
<keyword id="KW-0723">Serine/threonine-protein kinase</keyword>
<keyword id="KW-0732">Signal</keyword>
<keyword id="KW-0808">Transferase</keyword>
<keyword id="KW-0812">Transmembrane</keyword>
<keyword id="KW-1133">Transmembrane helix</keyword>
<gene>
    <name type="primary">LECRK41</name>
    <name type="synonym">LECRKE</name>
    <name type="synonym">LRK1</name>
    <name type="ordered locus">At2g37710</name>
    <name type="ORF">F13M22.21</name>
</gene>